<gene>
    <name evidence="1" type="primary">pyrG</name>
    <name type="ordered locus">cbdbA1371</name>
</gene>
<accession>Q3ZYU1</accession>
<protein>
    <recommendedName>
        <fullName evidence="1">CTP synthase</fullName>
        <ecNumber evidence="1">6.3.4.2</ecNumber>
    </recommendedName>
    <alternativeName>
        <fullName evidence="1">Cytidine 5'-triphosphate synthase</fullName>
    </alternativeName>
    <alternativeName>
        <fullName evidence="1">Cytidine triphosphate synthetase</fullName>
        <shortName evidence="1">CTP synthetase</shortName>
        <shortName evidence="1">CTPS</shortName>
    </alternativeName>
    <alternativeName>
        <fullName evidence="1">UTP--ammonia ligase</fullName>
    </alternativeName>
</protein>
<comment type="function">
    <text evidence="1">Catalyzes the ATP-dependent amination of UTP to CTP with either L-glutamine or ammonia as the source of nitrogen. Regulates intracellular CTP levels through interactions with the four ribonucleotide triphosphates.</text>
</comment>
<comment type="catalytic activity">
    <reaction evidence="1">
        <text>UTP + L-glutamine + ATP + H2O = CTP + L-glutamate + ADP + phosphate + 2 H(+)</text>
        <dbReference type="Rhea" id="RHEA:26426"/>
        <dbReference type="ChEBI" id="CHEBI:15377"/>
        <dbReference type="ChEBI" id="CHEBI:15378"/>
        <dbReference type="ChEBI" id="CHEBI:29985"/>
        <dbReference type="ChEBI" id="CHEBI:30616"/>
        <dbReference type="ChEBI" id="CHEBI:37563"/>
        <dbReference type="ChEBI" id="CHEBI:43474"/>
        <dbReference type="ChEBI" id="CHEBI:46398"/>
        <dbReference type="ChEBI" id="CHEBI:58359"/>
        <dbReference type="ChEBI" id="CHEBI:456216"/>
        <dbReference type="EC" id="6.3.4.2"/>
    </reaction>
</comment>
<comment type="catalytic activity">
    <reaction evidence="1">
        <text>L-glutamine + H2O = L-glutamate + NH4(+)</text>
        <dbReference type="Rhea" id="RHEA:15889"/>
        <dbReference type="ChEBI" id="CHEBI:15377"/>
        <dbReference type="ChEBI" id="CHEBI:28938"/>
        <dbReference type="ChEBI" id="CHEBI:29985"/>
        <dbReference type="ChEBI" id="CHEBI:58359"/>
    </reaction>
</comment>
<comment type="catalytic activity">
    <reaction evidence="1">
        <text>UTP + NH4(+) + ATP = CTP + ADP + phosphate + 2 H(+)</text>
        <dbReference type="Rhea" id="RHEA:16597"/>
        <dbReference type="ChEBI" id="CHEBI:15378"/>
        <dbReference type="ChEBI" id="CHEBI:28938"/>
        <dbReference type="ChEBI" id="CHEBI:30616"/>
        <dbReference type="ChEBI" id="CHEBI:37563"/>
        <dbReference type="ChEBI" id="CHEBI:43474"/>
        <dbReference type="ChEBI" id="CHEBI:46398"/>
        <dbReference type="ChEBI" id="CHEBI:456216"/>
    </reaction>
</comment>
<comment type="activity regulation">
    <text evidence="1">Allosterically activated by GTP, when glutamine is the substrate; GTP has no effect on the reaction when ammonia is the substrate. The allosteric effector GTP functions by stabilizing the protein conformation that binds the tetrahedral intermediate(s) formed during glutamine hydrolysis. Inhibited by the product CTP, via allosteric rather than competitive inhibition.</text>
</comment>
<comment type="pathway">
    <text evidence="1">Pyrimidine metabolism; CTP biosynthesis via de novo pathway; CTP from UDP: step 2/2.</text>
</comment>
<comment type="subunit">
    <text evidence="1">Homotetramer.</text>
</comment>
<comment type="miscellaneous">
    <text evidence="1">CTPSs have evolved a hybrid strategy for distinguishing between UTP and CTP. The overlapping regions of the product feedback inhibitory and substrate sites recognize a common feature in both compounds, the triphosphate moiety. To differentiate isosteric substrate and product pyrimidine rings, an additional pocket far from the expected kinase/ligase catalytic site, specifically recognizes the cytosine and ribose portions of the product inhibitor.</text>
</comment>
<comment type="similarity">
    <text evidence="1">Belongs to the CTP synthase family.</text>
</comment>
<reference key="1">
    <citation type="journal article" date="2005" name="Nat. Biotechnol.">
        <title>Genome sequence of the chlorinated compound-respiring bacterium Dehalococcoides species strain CBDB1.</title>
        <authorList>
            <person name="Kube M."/>
            <person name="Beck A."/>
            <person name="Zinder S.H."/>
            <person name="Kuhl H."/>
            <person name="Reinhardt R."/>
            <person name="Adrian L."/>
        </authorList>
    </citation>
    <scope>NUCLEOTIDE SEQUENCE [LARGE SCALE GENOMIC DNA]</scope>
    <source>
        <strain>CBDB1</strain>
    </source>
</reference>
<proteinExistence type="inferred from homology"/>
<organism>
    <name type="scientific">Dehalococcoides mccartyi (strain CBDB1)</name>
    <dbReference type="NCBI Taxonomy" id="255470"/>
    <lineage>
        <taxon>Bacteria</taxon>
        <taxon>Bacillati</taxon>
        <taxon>Chloroflexota</taxon>
        <taxon>Dehalococcoidia</taxon>
        <taxon>Dehalococcoidales</taxon>
        <taxon>Dehalococcoidaceae</taxon>
        <taxon>Dehalococcoides</taxon>
    </lineage>
</organism>
<evidence type="ECO:0000255" key="1">
    <source>
        <dbReference type="HAMAP-Rule" id="MF_01227"/>
    </source>
</evidence>
<name>PYRG_DEHMC</name>
<sequence>MSKFIFVTGGVVSSVGKGITVASLGNILKSRGLSVSVQKLDPYLNVDPGTMSPYQHGEVFVTQDGAETDLDLGSYERFIDIELTADSTVTSGQVYSEVINKERRGDYLGGTIQVVPHVTQEIKARIQRLADRSKADVVIVEVGGTVGDIEGQPFLEAIRQMRNDTGRDNVLYIHVTLLPYIQSTQELKTKPTQHSVNELRRIGIQPDIIVCRADYPISEGIRDKISLFCDVERKAVIFMPTVSTIYEVPLKLESEGVGDLLVSRLHLNASPSDLSVWRGLVEKIKEPTPTVRIALVGKYVELKDAYYSVRESLCHAAIHNGRDIQIDWVHAEDIEKNGPEEYLKHVQGIIIPGGFGIRGIEGMISAVKYARENGIPYLGLCLGMQVMVIEFARYVLGSDKAHSTEFEPDSPYPVIDLLPEQRGVDSKGGTMRLGNYPCVIQPGTMAGQAYGNNLINERHRHRFEFNNDYRDTLSKAGMLFSGLSPDGKLVEICEVTGHPFMMGSQFHPEFLSRPNRPHPLFREFINAAKKVIRDGEQPSLPLSP</sequence>
<dbReference type="EC" id="6.3.4.2" evidence="1"/>
<dbReference type="EMBL" id="AJ965256">
    <property type="protein sequence ID" value="CAI83417.1"/>
    <property type="molecule type" value="Genomic_DNA"/>
</dbReference>
<dbReference type="RefSeq" id="WP_011309768.1">
    <property type="nucleotide sequence ID" value="NC_007356.1"/>
</dbReference>
<dbReference type="SMR" id="Q3ZYU1"/>
<dbReference type="MEROPS" id="C26.964"/>
<dbReference type="KEGG" id="deh:cbdbA1371"/>
<dbReference type="HOGENOM" id="CLU_011675_5_0_0"/>
<dbReference type="UniPathway" id="UPA00159">
    <property type="reaction ID" value="UER00277"/>
</dbReference>
<dbReference type="Proteomes" id="UP000000433">
    <property type="component" value="Chromosome"/>
</dbReference>
<dbReference type="GO" id="GO:0005829">
    <property type="term" value="C:cytosol"/>
    <property type="evidence" value="ECO:0007669"/>
    <property type="project" value="TreeGrafter"/>
</dbReference>
<dbReference type="GO" id="GO:0005524">
    <property type="term" value="F:ATP binding"/>
    <property type="evidence" value="ECO:0007669"/>
    <property type="project" value="UniProtKB-KW"/>
</dbReference>
<dbReference type="GO" id="GO:0003883">
    <property type="term" value="F:CTP synthase activity"/>
    <property type="evidence" value="ECO:0007669"/>
    <property type="project" value="UniProtKB-UniRule"/>
</dbReference>
<dbReference type="GO" id="GO:0004359">
    <property type="term" value="F:glutaminase activity"/>
    <property type="evidence" value="ECO:0007669"/>
    <property type="project" value="RHEA"/>
</dbReference>
<dbReference type="GO" id="GO:0042802">
    <property type="term" value="F:identical protein binding"/>
    <property type="evidence" value="ECO:0007669"/>
    <property type="project" value="TreeGrafter"/>
</dbReference>
<dbReference type="GO" id="GO:0046872">
    <property type="term" value="F:metal ion binding"/>
    <property type="evidence" value="ECO:0007669"/>
    <property type="project" value="UniProtKB-KW"/>
</dbReference>
<dbReference type="GO" id="GO:0044210">
    <property type="term" value="P:'de novo' CTP biosynthetic process"/>
    <property type="evidence" value="ECO:0007669"/>
    <property type="project" value="UniProtKB-UniRule"/>
</dbReference>
<dbReference type="GO" id="GO:0019856">
    <property type="term" value="P:pyrimidine nucleobase biosynthetic process"/>
    <property type="evidence" value="ECO:0007669"/>
    <property type="project" value="TreeGrafter"/>
</dbReference>
<dbReference type="CDD" id="cd03113">
    <property type="entry name" value="CTPS_N"/>
    <property type="match status" value="1"/>
</dbReference>
<dbReference type="CDD" id="cd01746">
    <property type="entry name" value="GATase1_CTP_Synthase"/>
    <property type="match status" value="1"/>
</dbReference>
<dbReference type="FunFam" id="3.40.50.300:FF:000009">
    <property type="entry name" value="CTP synthase"/>
    <property type="match status" value="1"/>
</dbReference>
<dbReference type="FunFam" id="3.40.50.880:FF:000002">
    <property type="entry name" value="CTP synthase"/>
    <property type="match status" value="1"/>
</dbReference>
<dbReference type="Gene3D" id="3.40.50.880">
    <property type="match status" value="1"/>
</dbReference>
<dbReference type="Gene3D" id="3.40.50.300">
    <property type="entry name" value="P-loop containing nucleotide triphosphate hydrolases"/>
    <property type="match status" value="1"/>
</dbReference>
<dbReference type="HAMAP" id="MF_01227">
    <property type="entry name" value="PyrG"/>
    <property type="match status" value="1"/>
</dbReference>
<dbReference type="InterPro" id="IPR029062">
    <property type="entry name" value="Class_I_gatase-like"/>
</dbReference>
<dbReference type="InterPro" id="IPR004468">
    <property type="entry name" value="CTP_synthase"/>
</dbReference>
<dbReference type="InterPro" id="IPR017456">
    <property type="entry name" value="CTP_synthase_N"/>
</dbReference>
<dbReference type="InterPro" id="IPR017926">
    <property type="entry name" value="GATASE"/>
</dbReference>
<dbReference type="InterPro" id="IPR033828">
    <property type="entry name" value="GATase1_CTP_Synthase"/>
</dbReference>
<dbReference type="InterPro" id="IPR027417">
    <property type="entry name" value="P-loop_NTPase"/>
</dbReference>
<dbReference type="NCBIfam" id="NF003792">
    <property type="entry name" value="PRK05380.1"/>
    <property type="match status" value="1"/>
</dbReference>
<dbReference type="NCBIfam" id="TIGR00337">
    <property type="entry name" value="PyrG"/>
    <property type="match status" value="1"/>
</dbReference>
<dbReference type="PANTHER" id="PTHR11550">
    <property type="entry name" value="CTP SYNTHASE"/>
    <property type="match status" value="1"/>
</dbReference>
<dbReference type="PANTHER" id="PTHR11550:SF0">
    <property type="entry name" value="CTP SYNTHASE-RELATED"/>
    <property type="match status" value="1"/>
</dbReference>
<dbReference type="Pfam" id="PF06418">
    <property type="entry name" value="CTP_synth_N"/>
    <property type="match status" value="1"/>
</dbReference>
<dbReference type="Pfam" id="PF00117">
    <property type="entry name" value="GATase"/>
    <property type="match status" value="1"/>
</dbReference>
<dbReference type="SUPFAM" id="SSF52317">
    <property type="entry name" value="Class I glutamine amidotransferase-like"/>
    <property type="match status" value="1"/>
</dbReference>
<dbReference type="SUPFAM" id="SSF52540">
    <property type="entry name" value="P-loop containing nucleoside triphosphate hydrolases"/>
    <property type="match status" value="1"/>
</dbReference>
<dbReference type="PROSITE" id="PS51273">
    <property type="entry name" value="GATASE_TYPE_1"/>
    <property type="match status" value="1"/>
</dbReference>
<keyword id="KW-0067">ATP-binding</keyword>
<keyword id="KW-0315">Glutamine amidotransferase</keyword>
<keyword id="KW-0436">Ligase</keyword>
<keyword id="KW-0460">Magnesium</keyword>
<keyword id="KW-0479">Metal-binding</keyword>
<keyword id="KW-0547">Nucleotide-binding</keyword>
<keyword id="KW-0665">Pyrimidine biosynthesis</keyword>
<feature type="chain" id="PRO_0000266105" description="CTP synthase">
    <location>
        <begin position="1"/>
        <end position="544"/>
    </location>
</feature>
<feature type="domain" description="Glutamine amidotransferase type-1" evidence="1">
    <location>
        <begin position="299"/>
        <end position="534"/>
    </location>
</feature>
<feature type="region of interest" description="Amidoligase domain" evidence="1">
    <location>
        <begin position="1"/>
        <end position="267"/>
    </location>
</feature>
<feature type="active site" description="Nucleophile; for glutamine hydrolysis" evidence="1">
    <location>
        <position position="381"/>
    </location>
</feature>
<feature type="active site" evidence="1">
    <location>
        <position position="507"/>
    </location>
</feature>
<feature type="active site" evidence="1">
    <location>
        <position position="509"/>
    </location>
</feature>
<feature type="binding site" evidence="1">
    <location>
        <position position="13"/>
    </location>
    <ligand>
        <name>CTP</name>
        <dbReference type="ChEBI" id="CHEBI:37563"/>
        <note>allosteric inhibitor</note>
    </ligand>
</feature>
<feature type="binding site" evidence="1">
    <location>
        <position position="13"/>
    </location>
    <ligand>
        <name>UTP</name>
        <dbReference type="ChEBI" id="CHEBI:46398"/>
    </ligand>
</feature>
<feature type="binding site" evidence="1">
    <location>
        <begin position="14"/>
        <end position="19"/>
    </location>
    <ligand>
        <name>ATP</name>
        <dbReference type="ChEBI" id="CHEBI:30616"/>
    </ligand>
</feature>
<feature type="binding site" evidence="1">
    <location>
        <position position="54"/>
    </location>
    <ligand>
        <name>L-glutamine</name>
        <dbReference type="ChEBI" id="CHEBI:58359"/>
    </ligand>
</feature>
<feature type="binding site" evidence="1">
    <location>
        <position position="71"/>
    </location>
    <ligand>
        <name>ATP</name>
        <dbReference type="ChEBI" id="CHEBI:30616"/>
    </ligand>
</feature>
<feature type="binding site" evidence="1">
    <location>
        <position position="71"/>
    </location>
    <ligand>
        <name>Mg(2+)</name>
        <dbReference type="ChEBI" id="CHEBI:18420"/>
    </ligand>
</feature>
<feature type="binding site" evidence="1">
    <location>
        <position position="141"/>
    </location>
    <ligand>
        <name>Mg(2+)</name>
        <dbReference type="ChEBI" id="CHEBI:18420"/>
    </ligand>
</feature>
<feature type="binding site" evidence="1">
    <location>
        <begin position="148"/>
        <end position="150"/>
    </location>
    <ligand>
        <name>CTP</name>
        <dbReference type="ChEBI" id="CHEBI:37563"/>
        <note>allosteric inhibitor</note>
    </ligand>
</feature>
<feature type="binding site" evidence="1">
    <location>
        <begin position="188"/>
        <end position="193"/>
    </location>
    <ligand>
        <name>CTP</name>
        <dbReference type="ChEBI" id="CHEBI:37563"/>
        <note>allosteric inhibitor</note>
    </ligand>
</feature>
<feature type="binding site" evidence="1">
    <location>
        <begin position="188"/>
        <end position="193"/>
    </location>
    <ligand>
        <name>UTP</name>
        <dbReference type="ChEBI" id="CHEBI:46398"/>
    </ligand>
</feature>
<feature type="binding site" evidence="1">
    <location>
        <position position="224"/>
    </location>
    <ligand>
        <name>CTP</name>
        <dbReference type="ChEBI" id="CHEBI:37563"/>
        <note>allosteric inhibitor</note>
    </ligand>
</feature>
<feature type="binding site" evidence="1">
    <location>
        <position position="224"/>
    </location>
    <ligand>
        <name>UTP</name>
        <dbReference type="ChEBI" id="CHEBI:46398"/>
    </ligand>
</feature>
<feature type="binding site" evidence="1">
    <location>
        <position position="354"/>
    </location>
    <ligand>
        <name>L-glutamine</name>
        <dbReference type="ChEBI" id="CHEBI:58359"/>
    </ligand>
</feature>
<feature type="binding site" evidence="1">
    <location>
        <begin position="382"/>
        <end position="385"/>
    </location>
    <ligand>
        <name>L-glutamine</name>
        <dbReference type="ChEBI" id="CHEBI:58359"/>
    </ligand>
</feature>
<feature type="binding site" evidence="1">
    <location>
        <position position="405"/>
    </location>
    <ligand>
        <name>L-glutamine</name>
        <dbReference type="ChEBI" id="CHEBI:58359"/>
    </ligand>
</feature>
<feature type="binding site" evidence="1">
    <location>
        <position position="462"/>
    </location>
    <ligand>
        <name>L-glutamine</name>
        <dbReference type="ChEBI" id="CHEBI:58359"/>
    </ligand>
</feature>